<reference key="1">
    <citation type="submission" date="2007-02" db="EMBL/GenBank/DDBJ databases">
        <title>Complete sequence of Pyrobaculum calidifontis JCM 11548.</title>
        <authorList>
            <consortium name="US DOE Joint Genome Institute"/>
            <person name="Copeland A."/>
            <person name="Lucas S."/>
            <person name="Lapidus A."/>
            <person name="Barry K."/>
            <person name="Glavina del Rio T."/>
            <person name="Dalin E."/>
            <person name="Tice H."/>
            <person name="Pitluck S."/>
            <person name="Chain P."/>
            <person name="Malfatti S."/>
            <person name="Shin M."/>
            <person name="Vergez L."/>
            <person name="Schmutz J."/>
            <person name="Larimer F."/>
            <person name="Land M."/>
            <person name="Hauser L."/>
            <person name="Kyrpides N."/>
            <person name="Mikhailova N."/>
            <person name="Cozen A.E."/>
            <person name="Fitz-Gibbon S.T."/>
            <person name="House C.H."/>
            <person name="Saltikov C."/>
            <person name="Lowe T.M."/>
            <person name="Richardson P."/>
        </authorList>
    </citation>
    <scope>NUCLEOTIDE SEQUENCE [LARGE SCALE GENOMIC DNA]</scope>
    <source>
        <strain>DSM 21063 / JCM 11548 / VA1</strain>
    </source>
</reference>
<protein>
    <recommendedName>
        <fullName evidence="1">TATA-box-binding protein</fullName>
    </recommendedName>
    <alternativeName>
        <fullName evidence="1">Box A-binding protein</fullName>
        <shortName evidence="1">BAP</shortName>
    </alternativeName>
    <alternativeName>
        <fullName evidence="1">TATA sequence-binding protein</fullName>
        <shortName evidence="1">TBP</shortName>
    </alternativeName>
    <alternativeName>
        <fullName evidence="1">TATA-box factor</fullName>
    </alternativeName>
</protein>
<evidence type="ECO:0000255" key="1">
    <source>
        <dbReference type="HAMAP-Rule" id="MF_00408"/>
    </source>
</evidence>
<gene>
    <name evidence="1" type="primary">tbp</name>
    <name type="ordered locus">Pcal_1078</name>
</gene>
<keyword id="KW-0238">DNA-binding</keyword>
<keyword id="KW-0677">Repeat</keyword>
<keyword id="KW-0804">Transcription</keyword>
<keyword id="KW-0805">Transcription regulation</keyword>
<comment type="function">
    <text evidence="1">General factor that plays a role in the activation of archaeal genes transcribed by RNA polymerase. Binds specifically to the TATA box promoter element which lies close to the position of transcription initiation.</text>
</comment>
<comment type="similarity">
    <text evidence="1">Belongs to the TBP family.</text>
</comment>
<organism>
    <name type="scientific">Pyrobaculum calidifontis (strain DSM 21063 / JCM 11548 / VA1)</name>
    <dbReference type="NCBI Taxonomy" id="410359"/>
    <lineage>
        <taxon>Archaea</taxon>
        <taxon>Thermoproteota</taxon>
        <taxon>Thermoprotei</taxon>
        <taxon>Thermoproteales</taxon>
        <taxon>Thermoproteaceae</taxon>
        <taxon>Pyrobaculum</taxon>
    </lineage>
</organism>
<feature type="chain" id="PRO_1000049886" description="TATA-box-binding protein">
    <location>
        <begin position="1"/>
        <end position="199"/>
    </location>
</feature>
<feature type="repeat" description="1">
    <location>
        <begin position="10"/>
        <end position="86"/>
    </location>
</feature>
<feature type="repeat" description="2">
    <location>
        <begin position="101"/>
        <end position="177"/>
    </location>
</feature>
<accession>A3MV36</accession>
<dbReference type="EMBL" id="CP000561">
    <property type="protein sequence ID" value="ABO08503.1"/>
    <property type="molecule type" value="Genomic_DNA"/>
</dbReference>
<dbReference type="RefSeq" id="WP_011849761.1">
    <property type="nucleotide sequence ID" value="NC_009073.1"/>
</dbReference>
<dbReference type="SMR" id="A3MV36"/>
<dbReference type="STRING" id="410359.Pcal_1078"/>
<dbReference type="GeneID" id="4910023"/>
<dbReference type="KEGG" id="pcl:Pcal_1078"/>
<dbReference type="eggNOG" id="arCOG01764">
    <property type="taxonomic scope" value="Archaea"/>
</dbReference>
<dbReference type="HOGENOM" id="CLU_060161_4_3_2"/>
<dbReference type="OrthoDB" id="350539at2157"/>
<dbReference type="Proteomes" id="UP000001431">
    <property type="component" value="Chromosome"/>
</dbReference>
<dbReference type="GO" id="GO:0003677">
    <property type="term" value="F:DNA binding"/>
    <property type="evidence" value="ECO:0007669"/>
    <property type="project" value="UniProtKB-KW"/>
</dbReference>
<dbReference type="GO" id="GO:0003700">
    <property type="term" value="F:DNA-binding transcription factor activity"/>
    <property type="evidence" value="ECO:0007669"/>
    <property type="project" value="UniProtKB-UniRule"/>
</dbReference>
<dbReference type="GO" id="GO:0006352">
    <property type="term" value="P:DNA-templated transcription initiation"/>
    <property type="evidence" value="ECO:0007669"/>
    <property type="project" value="InterPro"/>
</dbReference>
<dbReference type="CDD" id="cd04518">
    <property type="entry name" value="TBP_archaea"/>
    <property type="match status" value="1"/>
</dbReference>
<dbReference type="FunFam" id="3.30.310.10:FF:000007">
    <property type="entry name" value="TATA-box-binding protein"/>
    <property type="match status" value="1"/>
</dbReference>
<dbReference type="FunFam" id="3.30.310.10:FF:000010">
    <property type="entry name" value="TATA-box-binding protein"/>
    <property type="match status" value="1"/>
</dbReference>
<dbReference type="Gene3D" id="3.30.310.10">
    <property type="entry name" value="TATA-Binding Protein"/>
    <property type="match status" value="2"/>
</dbReference>
<dbReference type="HAMAP" id="MF_00408">
    <property type="entry name" value="TATA_bind_prot_arch"/>
    <property type="match status" value="1"/>
</dbReference>
<dbReference type="InterPro" id="IPR000814">
    <property type="entry name" value="TBP"/>
</dbReference>
<dbReference type="InterPro" id="IPR033711">
    <property type="entry name" value="TBP_archaea"/>
</dbReference>
<dbReference type="InterPro" id="IPR030491">
    <property type="entry name" value="TBP_CS"/>
</dbReference>
<dbReference type="InterPro" id="IPR012295">
    <property type="entry name" value="TBP_dom_sf"/>
</dbReference>
<dbReference type="NCBIfam" id="NF001592">
    <property type="entry name" value="PRK00394.1-1"/>
    <property type="match status" value="1"/>
</dbReference>
<dbReference type="NCBIfam" id="NF001593">
    <property type="entry name" value="PRK00394.1-2"/>
    <property type="match status" value="1"/>
</dbReference>
<dbReference type="PANTHER" id="PTHR10126">
    <property type="entry name" value="TATA-BOX BINDING PROTEIN"/>
    <property type="match status" value="1"/>
</dbReference>
<dbReference type="Pfam" id="PF00352">
    <property type="entry name" value="TBP"/>
    <property type="match status" value="2"/>
</dbReference>
<dbReference type="PRINTS" id="PR00686">
    <property type="entry name" value="TIFACTORIID"/>
</dbReference>
<dbReference type="SUPFAM" id="SSF55945">
    <property type="entry name" value="TATA-box binding protein-like"/>
    <property type="match status" value="2"/>
</dbReference>
<dbReference type="PROSITE" id="PS00351">
    <property type="entry name" value="TFIID"/>
    <property type="match status" value="2"/>
</dbReference>
<proteinExistence type="inferred from homology"/>
<name>TBP_PYRCJ</name>
<sequence>MSSKGPSYRIENIVATVNLGVELDLESLAERLPMAEYNPDQFPGLILRLTKPRISALIFRTGKMVCTGAKNEEDLKNAVRALVKLLNDHGAEVPFDPEVQIQNIVASGNLHAEVDLEQAVFMLENAMYEPEQFPGLIYRMSSPRVVILIFGSGKIVCTGAKSEKDVATAVQKLYNQLKELGVLYIEEGGGEEEEEEEEM</sequence>